<sequence>MGREFIPLFEDWAATYDQTVQGLDIQYKEAFRGYDHILDAIVRKSGTHVLEFGPGTGNLTAKLLDAGKTVFGIEPSPAMRKLASDKLSGRTEIVDGDFLTFPEPPFQADTIVSSYAFHHLTDEEKRAAIKQYGKYLHLHDKIVFADTVFENAQAYQQAIDKARSQGFYQLANDLETEHYPTLDALKEMFTAEGFAVRFTQQNDFVWIMEAIKR</sequence>
<dbReference type="EC" id="2.1.1.-"/>
<dbReference type="EMBL" id="AL009126">
    <property type="protein sequence ID" value="CAB14670.1"/>
    <property type="molecule type" value="Genomic_DNA"/>
</dbReference>
<dbReference type="PIR" id="C69980">
    <property type="entry name" value="C69980"/>
</dbReference>
<dbReference type="RefSeq" id="NP_390606.1">
    <property type="nucleotide sequence ID" value="NC_000964.3"/>
</dbReference>
<dbReference type="RefSeq" id="WP_003229807.1">
    <property type="nucleotide sequence ID" value="NZ_OZ025638.1"/>
</dbReference>
<dbReference type="SMR" id="O32029"/>
<dbReference type="FunCoup" id="O32029">
    <property type="interactions" value="183"/>
</dbReference>
<dbReference type="STRING" id="224308.BSU27280"/>
<dbReference type="PaxDb" id="224308-BSU27280"/>
<dbReference type="EnsemblBacteria" id="CAB14670">
    <property type="protein sequence ID" value="CAB14670"/>
    <property type="gene ID" value="BSU_27280"/>
</dbReference>
<dbReference type="GeneID" id="937566"/>
<dbReference type="KEGG" id="bsu:BSU27280"/>
<dbReference type="PATRIC" id="fig|224308.179.peg.2964"/>
<dbReference type="eggNOG" id="COG2226">
    <property type="taxonomic scope" value="Bacteria"/>
</dbReference>
<dbReference type="InParanoid" id="O32029"/>
<dbReference type="OrthoDB" id="465705at2"/>
<dbReference type="PhylomeDB" id="O32029"/>
<dbReference type="BioCyc" id="BSUB:BSU27280-MONOMER"/>
<dbReference type="Proteomes" id="UP000001570">
    <property type="component" value="Chromosome"/>
</dbReference>
<dbReference type="GO" id="GO:0005829">
    <property type="term" value="C:cytosol"/>
    <property type="evidence" value="ECO:0000318"/>
    <property type="project" value="GO_Central"/>
</dbReference>
<dbReference type="GO" id="GO:0000179">
    <property type="term" value="F:rRNA (adenine-N6,N6-)-dimethyltransferase activity"/>
    <property type="evidence" value="ECO:0000318"/>
    <property type="project" value="GO_Central"/>
</dbReference>
<dbReference type="GO" id="GO:0031167">
    <property type="term" value="P:rRNA methylation"/>
    <property type="evidence" value="ECO:0000318"/>
    <property type="project" value="GO_Central"/>
</dbReference>
<dbReference type="CDD" id="cd02440">
    <property type="entry name" value="AdoMet_MTases"/>
    <property type="match status" value="1"/>
</dbReference>
<dbReference type="Gene3D" id="3.40.50.150">
    <property type="entry name" value="Vaccinia Virus protein VP39"/>
    <property type="match status" value="1"/>
</dbReference>
<dbReference type="HAMAP" id="MF_02100">
    <property type="entry name" value="Methyltr_YrrT"/>
    <property type="match status" value="1"/>
</dbReference>
<dbReference type="InterPro" id="IPR041698">
    <property type="entry name" value="Methyltransf_25"/>
</dbReference>
<dbReference type="InterPro" id="IPR020598">
    <property type="entry name" value="rRNA_Ade_methylase_Trfase_N"/>
</dbReference>
<dbReference type="InterPro" id="IPR029063">
    <property type="entry name" value="SAM-dependent_MTases_sf"/>
</dbReference>
<dbReference type="InterPro" id="IPR023553">
    <property type="entry name" value="Uncharacterised_MeTfrase_YrrT"/>
</dbReference>
<dbReference type="PANTHER" id="PTHR43861">
    <property type="entry name" value="TRANS-ACONITATE 2-METHYLTRANSFERASE-RELATED"/>
    <property type="match status" value="1"/>
</dbReference>
<dbReference type="Pfam" id="PF13649">
    <property type="entry name" value="Methyltransf_25"/>
    <property type="match status" value="1"/>
</dbReference>
<dbReference type="SMART" id="SM00650">
    <property type="entry name" value="rADc"/>
    <property type="match status" value="1"/>
</dbReference>
<dbReference type="SUPFAM" id="SSF53335">
    <property type="entry name" value="S-adenosyl-L-methionine-dependent methyltransferases"/>
    <property type="match status" value="1"/>
</dbReference>
<gene>
    <name type="primary">yrrT</name>
    <name type="ordered locus">BSU27280</name>
</gene>
<proteinExistence type="evidence at transcript level"/>
<feature type="chain" id="PRO_0000373848" description="Uncharacterized methyltransferase YrrT">
    <location>
        <begin position="1"/>
        <end position="213"/>
    </location>
</feature>
<feature type="binding site" evidence="1">
    <location>
        <position position="53"/>
    </location>
    <ligand>
        <name>S-adenosyl-L-methionine</name>
        <dbReference type="ChEBI" id="CHEBI:59789"/>
    </ligand>
</feature>
<feature type="binding site" evidence="1">
    <location>
        <position position="74"/>
    </location>
    <ligand>
        <name>S-adenosyl-L-methionine</name>
        <dbReference type="ChEBI" id="CHEBI:59789"/>
    </ligand>
</feature>
<feature type="binding site" evidence="1">
    <location>
        <position position="97"/>
    </location>
    <ligand>
        <name>S-adenosyl-L-methionine</name>
        <dbReference type="ChEBI" id="CHEBI:59789"/>
    </ligand>
</feature>
<name>YRRT_BACSU</name>
<keyword id="KW-0489">Methyltransferase</keyword>
<keyword id="KW-1185">Reference proteome</keyword>
<keyword id="KW-0949">S-adenosyl-L-methionine</keyword>
<keyword id="KW-0808">Transferase</keyword>
<reference key="1">
    <citation type="journal article" date="1997" name="Nature">
        <title>The complete genome sequence of the Gram-positive bacterium Bacillus subtilis.</title>
        <authorList>
            <person name="Kunst F."/>
            <person name="Ogasawara N."/>
            <person name="Moszer I."/>
            <person name="Albertini A.M."/>
            <person name="Alloni G."/>
            <person name="Azevedo V."/>
            <person name="Bertero M.G."/>
            <person name="Bessieres P."/>
            <person name="Bolotin A."/>
            <person name="Borchert S."/>
            <person name="Borriss R."/>
            <person name="Boursier L."/>
            <person name="Brans A."/>
            <person name="Braun M."/>
            <person name="Brignell S.C."/>
            <person name="Bron S."/>
            <person name="Brouillet S."/>
            <person name="Bruschi C.V."/>
            <person name="Caldwell B."/>
            <person name="Capuano V."/>
            <person name="Carter N.M."/>
            <person name="Choi S.-K."/>
            <person name="Codani J.-J."/>
            <person name="Connerton I.F."/>
            <person name="Cummings N.J."/>
            <person name="Daniel R.A."/>
            <person name="Denizot F."/>
            <person name="Devine K.M."/>
            <person name="Duesterhoeft A."/>
            <person name="Ehrlich S.D."/>
            <person name="Emmerson P.T."/>
            <person name="Entian K.-D."/>
            <person name="Errington J."/>
            <person name="Fabret C."/>
            <person name="Ferrari E."/>
            <person name="Foulger D."/>
            <person name="Fritz C."/>
            <person name="Fujita M."/>
            <person name="Fujita Y."/>
            <person name="Fuma S."/>
            <person name="Galizzi A."/>
            <person name="Galleron N."/>
            <person name="Ghim S.-Y."/>
            <person name="Glaser P."/>
            <person name="Goffeau A."/>
            <person name="Golightly E.J."/>
            <person name="Grandi G."/>
            <person name="Guiseppi G."/>
            <person name="Guy B.J."/>
            <person name="Haga K."/>
            <person name="Haiech J."/>
            <person name="Harwood C.R."/>
            <person name="Henaut A."/>
            <person name="Hilbert H."/>
            <person name="Holsappel S."/>
            <person name="Hosono S."/>
            <person name="Hullo M.-F."/>
            <person name="Itaya M."/>
            <person name="Jones L.-M."/>
            <person name="Joris B."/>
            <person name="Karamata D."/>
            <person name="Kasahara Y."/>
            <person name="Klaerr-Blanchard M."/>
            <person name="Klein C."/>
            <person name="Kobayashi Y."/>
            <person name="Koetter P."/>
            <person name="Koningstein G."/>
            <person name="Krogh S."/>
            <person name="Kumano M."/>
            <person name="Kurita K."/>
            <person name="Lapidus A."/>
            <person name="Lardinois S."/>
            <person name="Lauber J."/>
            <person name="Lazarevic V."/>
            <person name="Lee S.-M."/>
            <person name="Levine A."/>
            <person name="Liu H."/>
            <person name="Masuda S."/>
            <person name="Mauel C."/>
            <person name="Medigue C."/>
            <person name="Medina N."/>
            <person name="Mellado R.P."/>
            <person name="Mizuno M."/>
            <person name="Moestl D."/>
            <person name="Nakai S."/>
            <person name="Noback M."/>
            <person name="Noone D."/>
            <person name="O'Reilly M."/>
            <person name="Ogawa K."/>
            <person name="Ogiwara A."/>
            <person name="Oudega B."/>
            <person name="Park S.-H."/>
            <person name="Parro V."/>
            <person name="Pohl T.M."/>
            <person name="Portetelle D."/>
            <person name="Porwollik S."/>
            <person name="Prescott A.M."/>
            <person name="Presecan E."/>
            <person name="Pujic P."/>
            <person name="Purnelle B."/>
            <person name="Rapoport G."/>
            <person name="Rey M."/>
            <person name="Reynolds S."/>
            <person name="Rieger M."/>
            <person name="Rivolta C."/>
            <person name="Rocha E."/>
            <person name="Roche B."/>
            <person name="Rose M."/>
            <person name="Sadaie Y."/>
            <person name="Sato T."/>
            <person name="Scanlan E."/>
            <person name="Schleich S."/>
            <person name="Schroeter R."/>
            <person name="Scoffone F."/>
            <person name="Sekiguchi J."/>
            <person name="Sekowska A."/>
            <person name="Seror S.J."/>
            <person name="Serror P."/>
            <person name="Shin B.-S."/>
            <person name="Soldo B."/>
            <person name="Sorokin A."/>
            <person name="Tacconi E."/>
            <person name="Takagi T."/>
            <person name="Takahashi H."/>
            <person name="Takemaru K."/>
            <person name="Takeuchi M."/>
            <person name="Tamakoshi A."/>
            <person name="Tanaka T."/>
            <person name="Terpstra P."/>
            <person name="Tognoni A."/>
            <person name="Tosato V."/>
            <person name="Uchiyama S."/>
            <person name="Vandenbol M."/>
            <person name="Vannier F."/>
            <person name="Vassarotti A."/>
            <person name="Viari A."/>
            <person name="Wambutt R."/>
            <person name="Wedler E."/>
            <person name="Wedler H."/>
            <person name="Weitzenegger T."/>
            <person name="Winters P."/>
            <person name="Wipat A."/>
            <person name="Yamamoto H."/>
            <person name="Yamane K."/>
            <person name="Yasumoto K."/>
            <person name="Yata K."/>
            <person name="Yoshida K."/>
            <person name="Yoshikawa H.-F."/>
            <person name="Zumstein E."/>
            <person name="Yoshikawa H."/>
            <person name="Danchin A."/>
        </authorList>
    </citation>
    <scope>NUCLEOTIDE SEQUENCE [LARGE SCALE GENOMIC DNA]</scope>
    <source>
        <strain>168</strain>
    </source>
</reference>
<reference key="2">
    <citation type="journal article" date="2007" name="J. Bacteriol.">
        <title>Conversion of methionine to cysteine in Bacillus subtilis and its regulation.</title>
        <authorList>
            <person name="Hullo M.-F."/>
            <person name="Auger S."/>
            <person name="Soutourina O."/>
            <person name="Barzu O."/>
            <person name="Yvon M."/>
            <person name="Danchin A."/>
            <person name="Martin-Verstraete I."/>
        </authorList>
    </citation>
    <scope>INDUCTION</scope>
</reference>
<evidence type="ECO:0000250" key="1"/>
<evidence type="ECO:0000269" key="2">
    <source>
    </source>
</evidence>
<evidence type="ECO:0000305" key="3"/>
<accession>O32029</accession>
<organism>
    <name type="scientific">Bacillus subtilis (strain 168)</name>
    <dbReference type="NCBI Taxonomy" id="224308"/>
    <lineage>
        <taxon>Bacteria</taxon>
        <taxon>Bacillati</taxon>
        <taxon>Bacillota</taxon>
        <taxon>Bacilli</taxon>
        <taxon>Bacillales</taxon>
        <taxon>Bacillaceae</taxon>
        <taxon>Bacillus</taxon>
    </lineage>
</organism>
<protein>
    <recommendedName>
        <fullName>Uncharacterized methyltransferase YrrT</fullName>
        <ecNumber>2.1.1.-</ecNumber>
    </recommendedName>
</protein>
<comment type="function">
    <text evidence="1">Could be a S-adenosyl-L-methionine-dependent methyltransferase.</text>
</comment>
<comment type="induction">
    <text evidence="2">By methionine. Repressed by sulfate and cysteine.</text>
</comment>
<comment type="similarity">
    <text evidence="3">Belongs to the methyltransferase superfamily. YrrT family.</text>
</comment>